<comment type="function">
    <text evidence="1">Aux/IAA proteins are short-lived transcriptional factors that function as repressors of early auxin response genes at low auxin concentrations.</text>
</comment>
<comment type="subunit">
    <text evidence="1">Homodimers and heterodimers.</text>
</comment>
<comment type="subcellular location">
    <subcellularLocation>
        <location evidence="1">Nucleus</location>
    </subcellularLocation>
</comment>
<comment type="tissue specificity">
    <text evidence="4">Highly expressed in etiolated seedlings and flowers. Expressed in roots and green seedlings.</text>
</comment>
<comment type="induction">
    <text evidence="4">By auxin.</text>
</comment>
<comment type="similarity">
    <text evidence="5">Belongs to the Aux/IAA family.</text>
</comment>
<evidence type="ECO:0000250" key="1"/>
<evidence type="ECO:0000255" key="2">
    <source>
        <dbReference type="PROSITE-ProRule" id="PRU01081"/>
    </source>
</evidence>
<evidence type="ECO:0000256" key="3">
    <source>
        <dbReference type="SAM" id="MobiDB-lite"/>
    </source>
</evidence>
<evidence type="ECO:0000269" key="4">
    <source>
    </source>
</evidence>
<evidence type="ECO:0000305" key="5"/>
<evidence type="ECO:0000312" key="6">
    <source>
        <dbReference type="EMBL" id="EEE62895.1"/>
    </source>
</evidence>
<reference key="1">
    <citation type="journal article" date="2005" name="Mol. Genet. Genomics">
        <title>A fine physical map of the rice chromosome 5.</title>
        <authorList>
            <person name="Cheng C.-H."/>
            <person name="Chung M.C."/>
            <person name="Liu S.-M."/>
            <person name="Chen S.-K."/>
            <person name="Kao F.Y."/>
            <person name="Lin S.-J."/>
            <person name="Hsiao S.-H."/>
            <person name="Tseng I.C."/>
            <person name="Hsing Y.-I.C."/>
            <person name="Wu H.-P."/>
            <person name="Chen C.-S."/>
            <person name="Shaw J.-F."/>
            <person name="Wu J."/>
            <person name="Matsumoto T."/>
            <person name="Sasaki T."/>
            <person name="Chen H.-C."/>
            <person name="Chow T.-Y."/>
        </authorList>
    </citation>
    <scope>NUCLEOTIDE SEQUENCE [LARGE SCALE GENOMIC DNA]</scope>
    <source>
        <strain>cv. Nipponbare</strain>
    </source>
</reference>
<reference key="2">
    <citation type="journal article" date="2005" name="Nature">
        <title>The map-based sequence of the rice genome.</title>
        <authorList>
            <consortium name="International rice genome sequencing project (IRGSP)"/>
        </authorList>
    </citation>
    <scope>NUCLEOTIDE SEQUENCE [LARGE SCALE GENOMIC DNA]</scope>
    <source>
        <strain>cv. Nipponbare</strain>
    </source>
</reference>
<reference key="3">
    <citation type="journal article" date="2013" name="Rice">
        <title>Improvement of the Oryza sativa Nipponbare reference genome using next generation sequence and optical map data.</title>
        <authorList>
            <person name="Kawahara Y."/>
            <person name="de la Bastide M."/>
            <person name="Hamilton J.P."/>
            <person name="Kanamori H."/>
            <person name="McCombie W.R."/>
            <person name="Ouyang S."/>
            <person name="Schwartz D.C."/>
            <person name="Tanaka T."/>
            <person name="Wu J."/>
            <person name="Zhou S."/>
            <person name="Childs K.L."/>
            <person name="Davidson R.M."/>
            <person name="Lin H."/>
            <person name="Quesada-Ocampo L."/>
            <person name="Vaillancourt B."/>
            <person name="Sakai H."/>
            <person name="Lee S.S."/>
            <person name="Kim J."/>
            <person name="Numa H."/>
            <person name="Itoh T."/>
            <person name="Buell C.R."/>
            <person name="Matsumoto T."/>
        </authorList>
    </citation>
    <scope>GENOME REANNOTATION</scope>
    <source>
        <strain>cv. Nipponbare</strain>
    </source>
</reference>
<reference key="4">
    <citation type="journal article" date="2005" name="PLoS Biol.">
        <title>The genomes of Oryza sativa: a history of duplications.</title>
        <authorList>
            <person name="Yu J."/>
            <person name="Wang J."/>
            <person name="Lin W."/>
            <person name="Li S."/>
            <person name="Li H."/>
            <person name="Zhou J."/>
            <person name="Ni P."/>
            <person name="Dong W."/>
            <person name="Hu S."/>
            <person name="Zeng C."/>
            <person name="Zhang J."/>
            <person name="Zhang Y."/>
            <person name="Li R."/>
            <person name="Xu Z."/>
            <person name="Li S."/>
            <person name="Li X."/>
            <person name="Zheng H."/>
            <person name="Cong L."/>
            <person name="Lin L."/>
            <person name="Yin J."/>
            <person name="Geng J."/>
            <person name="Li G."/>
            <person name="Shi J."/>
            <person name="Liu J."/>
            <person name="Lv H."/>
            <person name="Li J."/>
            <person name="Wang J."/>
            <person name="Deng Y."/>
            <person name="Ran L."/>
            <person name="Shi X."/>
            <person name="Wang X."/>
            <person name="Wu Q."/>
            <person name="Li C."/>
            <person name="Ren X."/>
            <person name="Wang J."/>
            <person name="Wang X."/>
            <person name="Li D."/>
            <person name="Liu D."/>
            <person name="Zhang X."/>
            <person name="Ji Z."/>
            <person name="Zhao W."/>
            <person name="Sun Y."/>
            <person name="Zhang Z."/>
            <person name="Bao J."/>
            <person name="Han Y."/>
            <person name="Dong L."/>
            <person name="Ji J."/>
            <person name="Chen P."/>
            <person name="Wu S."/>
            <person name="Liu J."/>
            <person name="Xiao Y."/>
            <person name="Bu D."/>
            <person name="Tan J."/>
            <person name="Yang L."/>
            <person name="Ye C."/>
            <person name="Zhang J."/>
            <person name="Xu J."/>
            <person name="Zhou Y."/>
            <person name="Yu Y."/>
            <person name="Zhang B."/>
            <person name="Zhuang S."/>
            <person name="Wei H."/>
            <person name="Liu B."/>
            <person name="Lei M."/>
            <person name="Yu H."/>
            <person name="Li Y."/>
            <person name="Xu H."/>
            <person name="Wei S."/>
            <person name="He X."/>
            <person name="Fang L."/>
            <person name="Zhang Z."/>
            <person name="Zhang Y."/>
            <person name="Huang X."/>
            <person name="Su Z."/>
            <person name="Tong W."/>
            <person name="Li J."/>
            <person name="Tong Z."/>
            <person name="Li S."/>
            <person name="Ye J."/>
            <person name="Wang L."/>
            <person name="Fang L."/>
            <person name="Lei T."/>
            <person name="Chen C.-S."/>
            <person name="Chen H.-C."/>
            <person name="Xu Z."/>
            <person name="Li H."/>
            <person name="Huang H."/>
            <person name="Zhang F."/>
            <person name="Xu H."/>
            <person name="Li N."/>
            <person name="Zhao C."/>
            <person name="Li S."/>
            <person name="Dong L."/>
            <person name="Huang Y."/>
            <person name="Li L."/>
            <person name="Xi Y."/>
            <person name="Qi Q."/>
            <person name="Li W."/>
            <person name="Zhang B."/>
            <person name="Hu W."/>
            <person name="Zhang Y."/>
            <person name="Tian X."/>
            <person name="Jiao Y."/>
            <person name="Liang X."/>
            <person name="Jin J."/>
            <person name="Gao L."/>
            <person name="Zheng W."/>
            <person name="Hao B."/>
            <person name="Liu S.-M."/>
            <person name="Wang W."/>
            <person name="Yuan L."/>
            <person name="Cao M."/>
            <person name="McDermott J."/>
            <person name="Samudrala R."/>
            <person name="Wang J."/>
            <person name="Wong G.K.-S."/>
            <person name="Yang H."/>
        </authorList>
    </citation>
    <scope>NUCLEOTIDE SEQUENCE [LARGE SCALE GENOMIC DNA]</scope>
    <source>
        <strain>cv. Nipponbare</strain>
    </source>
</reference>
<reference key="5">
    <citation type="journal article" date="2003" name="Science">
        <title>Collection, mapping, and annotation of over 28,000 cDNA clones from japonica rice.</title>
        <authorList>
            <consortium name="The rice full-length cDNA consortium"/>
        </authorList>
    </citation>
    <scope>NUCLEOTIDE SEQUENCE [LARGE SCALE MRNA]</scope>
    <source>
        <strain>cv. Nipponbare</strain>
    </source>
</reference>
<reference key="6">
    <citation type="journal article" date="2006" name="Funct. Integr. Genomics">
        <title>Structure and expression analysis of early auxin-responsive Aux/IAA gene family in rice (Oryza sativa).</title>
        <authorList>
            <person name="Jain M."/>
            <person name="Kaur N."/>
            <person name="Garg R."/>
            <person name="Thakur J.K."/>
            <person name="Tyagi A.K."/>
            <person name="Khurana J.P."/>
        </authorList>
    </citation>
    <scope>TISSUE SPECIFICITY</scope>
    <scope>INDUCTION</scope>
    <scope>NOMENCLATURE</scope>
</reference>
<gene>
    <name type="primary">IAA17</name>
    <name type="ordered locus">Os05g0230700</name>
    <name type="ordered locus">LOC_Os05g14180</name>
    <name type="ORF">B1402B06.19</name>
    <name evidence="6" type="ORF">OsJ_17700</name>
    <name type="ORF">OSJNBa0042F15.4</name>
</gene>
<sequence length="257" mass="27471">MSPPLELDYIGLSPPVPAAADAAADNDLKGTELRLGLPGSHSPDRSPPAATLDLLPAAKGAKRGFSDEARPLPASAAAAAAAGKGKKAAAGEEDEDAEEEDKKVAAAPQAPAAKAQVVGWPPIRSYRKNTMATNQLKSSKEDAEAKQGQGFLYVKVSMDGAPYLRKVDLKTYKNYKDLSTALEKMFIGFTTGKDGLSESRKDGEYVLTYEDKDGDWMLVGDVPWEMFANSCRRLRIMKGSDAIGLAPRAVDKSKNRN</sequence>
<organism>
    <name type="scientific">Oryza sativa subsp. japonica</name>
    <name type="common">Rice</name>
    <dbReference type="NCBI Taxonomy" id="39947"/>
    <lineage>
        <taxon>Eukaryota</taxon>
        <taxon>Viridiplantae</taxon>
        <taxon>Streptophyta</taxon>
        <taxon>Embryophyta</taxon>
        <taxon>Tracheophyta</taxon>
        <taxon>Spermatophyta</taxon>
        <taxon>Magnoliopsida</taxon>
        <taxon>Liliopsida</taxon>
        <taxon>Poales</taxon>
        <taxon>Poaceae</taxon>
        <taxon>BOP clade</taxon>
        <taxon>Oryzoideae</taxon>
        <taxon>Oryzeae</taxon>
        <taxon>Oryzinae</taxon>
        <taxon>Oryza</taxon>
        <taxon>Oryza sativa</taxon>
    </lineage>
</organism>
<proteinExistence type="evidence at transcript level"/>
<feature type="chain" id="PRO_0000223216" description="Auxin-responsive protein IAA17">
    <location>
        <begin position="1"/>
        <end position="257"/>
    </location>
</feature>
<feature type="domain" description="PB1" evidence="2">
    <location>
        <begin position="151"/>
        <end position="239"/>
    </location>
</feature>
<feature type="region of interest" description="Disordered" evidence="3">
    <location>
        <begin position="1"/>
        <end position="51"/>
    </location>
</feature>
<feature type="region of interest" description="Disordered" evidence="3">
    <location>
        <begin position="85"/>
        <end position="119"/>
    </location>
</feature>
<feature type="short sequence motif" description="EAR-like (transcriptional repression)" evidence="1">
    <location>
        <begin position="33"/>
        <end position="37"/>
    </location>
</feature>
<feature type="compositionally biased region" description="Low complexity" evidence="3">
    <location>
        <begin position="105"/>
        <end position="118"/>
    </location>
</feature>
<accession>Q75GB1</accession>
<accession>B7ETK8</accession>
<protein>
    <recommendedName>
        <fullName>Auxin-responsive protein IAA17</fullName>
    </recommendedName>
    <alternativeName>
        <fullName>Indoleacetic acid-induced protein 17</fullName>
    </alternativeName>
</protein>
<keyword id="KW-0927">Auxin signaling pathway</keyword>
<keyword id="KW-0539">Nucleus</keyword>
<keyword id="KW-1185">Reference proteome</keyword>
<keyword id="KW-0678">Repressor</keyword>
<keyword id="KW-0804">Transcription</keyword>
<keyword id="KW-0805">Transcription regulation</keyword>
<name>IAA17_ORYSJ</name>
<dbReference type="EMBL" id="AC145396">
    <property type="protein sequence ID" value="AAS98482.1"/>
    <property type="molecule type" value="Genomic_DNA"/>
</dbReference>
<dbReference type="EMBL" id="AC145477">
    <property type="protein sequence ID" value="AAT93852.1"/>
    <property type="molecule type" value="Genomic_DNA"/>
</dbReference>
<dbReference type="EMBL" id="AP014961">
    <property type="protein sequence ID" value="BAS92915.1"/>
    <property type="molecule type" value="Genomic_DNA"/>
</dbReference>
<dbReference type="EMBL" id="CM000142">
    <property type="protein sequence ID" value="EEE62895.1"/>
    <property type="molecule type" value="Genomic_DNA"/>
</dbReference>
<dbReference type="EMBL" id="AK102762">
    <property type="protein sequence ID" value="BAG95705.1"/>
    <property type="molecule type" value="mRNA"/>
</dbReference>
<dbReference type="EMBL" id="AK106192">
    <property type="protein sequence ID" value="BAG97631.1"/>
    <property type="molecule type" value="mRNA"/>
</dbReference>
<dbReference type="RefSeq" id="XP_015640226.1">
    <property type="nucleotide sequence ID" value="XM_015784740.1"/>
</dbReference>
<dbReference type="SMR" id="Q75GB1"/>
<dbReference type="FunCoup" id="Q75GB1">
    <property type="interactions" value="2"/>
</dbReference>
<dbReference type="STRING" id="39947.Q75GB1"/>
<dbReference type="PaxDb" id="39947-Q75GB1"/>
<dbReference type="EnsemblPlants" id="Os05t0230700-01">
    <property type="protein sequence ID" value="Os05t0230700-01"/>
    <property type="gene ID" value="Os05g0230700"/>
</dbReference>
<dbReference type="EnsemblPlants" id="Os05t0230700-02">
    <property type="protein sequence ID" value="Os05t0230700-02"/>
    <property type="gene ID" value="Os05g0230700"/>
</dbReference>
<dbReference type="Gramene" id="Os05t0230700-01">
    <property type="protein sequence ID" value="Os05t0230700-01"/>
    <property type="gene ID" value="Os05g0230700"/>
</dbReference>
<dbReference type="Gramene" id="Os05t0230700-02">
    <property type="protein sequence ID" value="Os05t0230700-02"/>
    <property type="gene ID" value="Os05g0230700"/>
</dbReference>
<dbReference type="eggNOG" id="ENOG502QTW8">
    <property type="taxonomic scope" value="Eukaryota"/>
</dbReference>
<dbReference type="HOGENOM" id="CLU_049393_1_5_1"/>
<dbReference type="InParanoid" id="Q75GB1"/>
<dbReference type="OMA" id="KANGYCH"/>
<dbReference type="OrthoDB" id="7848332at2759"/>
<dbReference type="PlantReactome" id="R-OSA-5608118">
    <property type="pathway name" value="Auxin signalling"/>
</dbReference>
<dbReference type="Proteomes" id="UP000000763">
    <property type="component" value="Chromosome 5"/>
</dbReference>
<dbReference type="Proteomes" id="UP000007752">
    <property type="component" value="Chromosome 5"/>
</dbReference>
<dbReference type="Proteomes" id="UP000059680">
    <property type="component" value="Chromosome 5"/>
</dbReference>
<dbReference type="ExpressionAtlas" id="Q75GB1">
    <property type="expression patterns" value="baseline and differential"/>
</dbReference>
<dbReference type="GO" id="GO:0005634">
    <property type="term" value="C:nucleus"/>
    <property type="evidence" value="ECO:0007669"/>
    <property type="project" value="UniProtKB-SubCell"/>
</dbReference>
<dbReference type="GO" id="GO:0009734">
    <property type="term" value="P:auxin-activated signaling pathway"/>
    <property type="evidence" value="ECO:0007669"/>
    <property type="project" value="UniProtKB-KW"/>
</dbReference>
<dbReference type="GO" id="GO:0006355">
    <property type="term" value="P:regulation of DNA-templated transcription"/>
    <property type="evidence" value="ECO:0007669"/>
    <property type="project" value="InterPro"/>
</dbReference>
<dbReference type="GO" id="GO:0009733">
    <property type="term" value="P:response to auxin"/>
    <property type="evidence" value="ECO:0000250"/>
    <property type="project" value="Gramene"/>
</dbReference>
<dbReference type="FunFam" id="3.10.20.90:FF:000078">
    <property type="entry name" value="Auxin-responsive protein"/>
    <property type="match status" value="1"/>
</dbReference>
<dbReference type="Gene3D" id="3.10.20.90">
    <property type="entry name" value="Phosphatidylinositol 3-kinase Catalytic Subunit, Chain A, domain 1"/>
    <property type="match status" value="1"/>
</dbReference>
<dbReference type="InterPro" id="IPR033389">
    <property type="entry name" value="AUX/IAA_dom"/>
</dbReference>
<dbReference type="InterPro" id="IPR003311">
    <property type="entry name" value="AUX_IAA"/>
</dbReference>
<dbReference type="InterPro" id="IPR053793">
    <property type="entry name" value="PB1-like"/>
</dbReference>
<dbReference type="PANTHER" id="PTHR31734">
    <property type="entry name" value="AUXIN-RESPONSIVE PROTEIN IAA17"/>
    <property type="match status" value="1"/>
</dbReference>
<dbReference type="PANTHER" id="PTHR31734:SF226">
    <property type="entry name" value="AUXIN-RESPONSIVE PROTEIN IAA17"/>
    <property type="match status" value="1"/>
</dbReference>
<dbReference type="Pfam" id="PF02309">
    <property type="entry name" value="AUX_IAA"/>
    <property type="match status" value="1"/>
</dbReference>
<dbReference type="SUPFAM" id="SSF54277">
    <property type="entry name" value="CAD &amp; PB1 domains"/>
    <property type="match status" value="1"/>
</dbReference>
<dbReference type="PROSITE" id="PS51745">
    <property type="entry name" value="PB1"/>
    <property type="match status" value="1"/>
</dbReference>